<name>RL14_ACIB5</name>
<protein>
    <recommendedName>
        <fullName evidence="1">Large ribosomal subunit protein uL14</fullName>
    </recommendedName>
    <alternativeName>
        <fullName evidence="2">50S ribosomal protein L14</fullName>
    </alternativeName>
</protein>
<feature type="chain" id="PRO_1000144206" description="Large ribosomal subunit protein uL14">
    <location>
        <begin position="1"/>
        <end position="122"/>
    </location>
</feature>
<feature type="strand" evidence="3">
    <location>
        <begin position="7"/>
        <end position="10"/>
    </location>
</feature>
<feature type="strand" evidence="3">
    <location>
        <begin position="12"/>
        <end position="24"/>
    </location>
</feature>
<feature type="strand" evidence="3">
    <location>
        <begin position="38"/>
        <end position="46"/>
    </location>
</feature>
<feature type="strand" evidence="3">
    <location>
        <begin position="57"/>
        <end position="64"/>
    </location>
</feature>
<feature type="strand" evidence="3">
    <location>
        <begin position="76"/>
        <end position="81"/>
    </location>
</feature>
<feature type="strand" evidence="3">
    <location>
        <begin position="83"/>
        <end position="87"/>
    </location>
</feature>
<feature type="helix" evidence="3">
    <location>
        <begin position="104"/>
        <end position="106"/>
    </location>
</feature>
<feature type="helix" evidence="3">
    <location>
        <begin position="109"/>
        <end position="111"/>
    </location>
</feature>
<feature type="helix" evidence="3">
    <location>
        <begin position="112"/>
        <end position="117"/>
    </location>
</feature>
<accession>B7IA29</accession>
<sequence>MIQTETMLDVADNSGARRVQCIKVLGGSHRRYASVGDIIKVTVKEAIPRARVKKGDVMNAVVVRTKFGIRRPDGSVIRFDDNAAVILNNNKAPIATRIFGPVTRELRTEQFMKIISLAPEVL</sequence>
<comment type="function">
    <text evidence="1">Binds to 23S rRNA. Forms part of two intersubunit bridges in the 70S ribosome.</text>
</comment>
<comment type="subunit">
    <text evidence="1">Part of the 50S ribosomal subunit. Forms a cluster with proteins L3 and L19. In the 70S ribosome, L14 and L19 interact and together make contacts with the 16S rRNA in bridges B5 and B8.</text>
</comment>
<comment type="similarity">
    <text evidence="1">Belongs to the universal ribosomal protein uL14 family.</text>
</comment>
<reference key="1">
    <citation type="journal article" date="2008" name="J. Bacteriol.">
        <title>Comparative genome sequence analysis of multidrug-resistant Acinetobacter baumannii.</title>
        <authorList>
            <person name="Adams M.D."/>
            <person name="Goglin K."/>
            <person name="Molyneaux N."/>
            <person name="Hujer K.M."/>
            <person name="Lavender H."/>
            <person name="Jamison J.J."/>
            <person name="MacDonald I.J."/>
            <person name="Martin K.M."/>
            <person name="Russo T."/>
            <person name="Campagnari A.A."/>
            <person name="Hujer A.M."/>
            <person name="Bonomo R.A."/>
            <person name="Gill S.R."/>
        </authorList>
    </citation>
    <scope>NUCLEOTIDE SEQUENCE [LARGE SCALE GENOMIC DNA]</scope>
    <source>
        <strain>AB0057</strain>
    </source>
</reference>
<keyword id="KW-0002">3D-structure</keyword>
<keyword id="KW-0687">Ribonucleoprotein</keyword>
<keyword id="KW-0689">Ribosomal protein</keyword>
<keyword id="KW-0694">RNA-binding</keyword>
<keyword id="KW-0699">rRNA-binding</keyword>
<dbReference type="EMBL" id="CP001182">
    <property type="protein sequence ID" value="ACJ42887.1"/>
    <property type="molecule type" value="Genomic_DNA"/>
</dbReference>
<dbReference type="RefSeq" id="WP_001982634.1">
    <property type="nucleotide sequence ID" value="NC_011586.2"/>
</dbReference>
<dbReference type="PDB" id="7M4V">
    <property type="method" value="EM"/>
    <property type="resolution" value="2.54 A"/>
    <property type="chains" value="J=1-122"/>
</dbReference>
<dbReference type="PDBsum" id="7M4V"/>
<dbReference type="SMR" id="B7IA29"/>
<dbReference type="IntAct" id="B7IA29">
    <property type="interactions" value="2"/>
</dbReference>
<dbReference type="GeneID" id="97425209"/>
<dbReference type="KEGG" id="abn:AB57_3520"/>
<dbReference type="HOGENOM" id="CLU_095071_2_1_6"/>
<dbReference type="Proteomes" id="UP000007094">
    <property type="component" value="Chromosome"/>
</dbReference>
<dbReference type="GO" id="GO:0022625">
    <property type="term" value="C:cytosolic large ribosomal subunit"/>
    <property type="evidence" value="ECO:0007669"/>
    <property type="project" value="TreeGrafter"/>
</dbReference>
<dbReference type="GO" id="GO:0070180">
    <property type="term" value="F:large ribosomal subunit rRNA binding"/>
    <property type="evidence" value="ECO:0007669"/>
    <property type="project" value="TreeGrafter"/>
</dbReference>
<dbReference type="GO" id="GO:0003735">
    <property type="term" value="F:structural constituent of ribosome"/>
    <property type="evidence" value="ECO:0007669"/>
    <property type="project" value="InterPro"/>
</dbReference>
<dbReference type="GO" id="GO:0006412">
    <property type="term" value="P:translation"/>
    <property type="evidence" value="ECO:0007669"/>
    <property type="project" value="UniProtKB-UniRule"/>
</dbReference>
<dbReference type="CDD" id="cd00337">
    <property type="entry name" value="Ribosomal_uL14"/>
    <property type="match status" value="1"/>
</dbReference>
<dbReference type="FunFam" id="2.40.150.20:FF:000001">
    <property type="entry name" value="50S ribosomal protein L14"/>
    <property type="match status" value="1"/>
</dbReference>
<dbReference type="Gene3D" id="2.40.150.20">
    <property type="entry name" value="Ribosomal protein L14"/>
    <property type="match status" value="1"/>
</dbReference>
<dbReference type="HAMAP" id="MF_01367">
    <property type="entry name" value="Ribosomal_uL14"/>
    <property type="match status" value="1"/>
</dbReference>
<dbReference type="InterPro" id="IPR000218">
    <property type="entry name" value="Ribosomal_uL14"/>
</dbReference>
<dbReference type="InterPro" id="IPR005745">
    <property type="entry name" value="Ribosomal_uL14_bac-type"/>
</dbReference>
<dbReference type="InterPro" id="IPR019972">
    <property type="entry name" value="Ribosomal_uL14_CS"/>
</dbReference>
<dbReference type="InterPro" id="IPR036853">
    <property type="entry name" value="Ribosomal_uL14_sf"/>
</dbReference>
<dbReference type="NCBIfam" id="TIGR01067">
    <property type="entry name" value="rplN_bact"/>
    <property type="match status" value="1"/>
</dbReference>
<dbReference type="PANTHER" id="PTHR11761">
    <property type="entry name" value="50S/60S RIBOSOMAL PROTEIN L14/L23"/>
    <property type="match status" value="1"/>
</dbReference>
<dbReference type="PANTHER" id="PTHR11761:SF3">
    <property type="entry name" value="LARGE RIBOSOMAL SUBUNIT PROTEIN UL14M"/>
    <property type="match status" value="1"/>
</dbReference>
<dbReference type="Pfam" id="PF00238">
    <property type="entry name" value="Ribosomal_L14"/>
    <property type="match status" value="1"/>
</dbReference>
<dbReference type="SMART" id="SM01374">
    <property type="entry name" value="Ribosomal_L14"/>
    <property type="match status" value="1"/>
</dbReference>
<dbReference type="SUPFAM" id="SSF50193">
    <property type="entry name" value="Ribosomal protein L14"/>
    <property type="match status" value="1"/>
</dbReference>
<dbReference type="PROSITE" id="PS00049">
    <property type="entry name" value="RIBOSOMAL_L14"/>
    <property type="match status" value="1"/>
</dbReference>
<organism>
    <name type="scientific">Acinetobacter baumannii (strain AB0057)</name>
    <dbReference type="NCBI Taxonomy" id="480119"/>
    <lineage>
        <taxon>Bacteria</taxon>
        <taxon>Pseudomonadati</taxon>
        <taxon>Pseudomonadota</taxon>
        <taxon>Gammaproteobacteria</taxon>
        <taxon>Moraxellales</taxon>
        <taxon>Moraxellaceae</taxon>
        <taxon>Acinetobacter</taxon>
        <taxon>Acinetobacter calcoaceticus/baumannii complex</taxon>
    </lineage>
</organism>
<evidence type="ECO:0000255" key="1">
    <source>
        <dbReference type="HAMAP-Rule" id="MF_01367"/>
    </source>
</evidence>
<evidence type="ECO:0000305" key="2"/>
<evidence type="ECO:0007829" key="3">
    <source>
        <dbReference type="PDB" id="7M4V"/>
    </source>
</evidence>
<gene>
    <name evidence="1" type="primary">rplN</name>
    <name type="ordered locus">AB57_3520</name>
</gene>
<proteinExistence type="evidence at protein level"/>